<feature type="chain" id="PRO_0000209961" description="Peptidase E">
    <location>
        <begin position="1"/>
        <end position="229"/>
    </location>
</feature>
<feature type="active site" description="Charge relay system" evidence="1">
    <location>
        <position position="120"/>
    </location>
</feature>
<feature type="active site" description="Charge relay system" evidence="1">
    <location>
        <position position="135"/>
    </location>
</feature>
<feature type="active site" description="Charge relay system" evidence="1">
    <location>
        <position position="157"/>
    </location>
</feature>
<feature type="sequence variant" description="In pepE1; deficient.">
    <original>S</original>
    <variation>T</variation>
    <location>
        <position position="120"/>
    </location>
</feature>
<feature type="sequence variant" description="In pepE1; deficient.">
    <original>P</original>
    <variation>S</variation>
    <location>
        <position position="137"/>
    </location>
</feature>
<feature type="strand" evidence="3">
    <location>
        <begin position="2"/>
        <end position="7"/>
    </location>
</feature>
<feature type="turn" evidence="3">
    <location>
        <begin position="16"/>
        <end position="20"/>
    </location>
</feature>
<feature type="helix" evidence="3">
    <location>
        <begin position="21"/>
        <end position="28"/>
    </location>
</feature>
<feature type="strand" evidence="3">
    <location>
        <begin position="33"/>
        <end position="37"/>
    </location>
</feature>
<feature type="strand" evidence="4">
    <location>
        <begin position="42"/>
        <end position="44"/>
    </location>
</feature>
<feature type="helix" evidence="3">
    <location>
        <begin position="46"/>
        <end position="57"/>
    </location>
</feature>
<feature type="helix" evidence="3">
    <location>
        <begin position="58"/>
        <end position="60"/>
    </location>
</feature>
<feature type="strand" evidence="3">
    <location>
        <begin position="63"/>
        <end position="66"/>
    </location>
</feature>
<feature type="strand" evidence="3">
    <location>
        <begin position="69"/>
        <end position="71"/>
    </location>
</feature>
<feature type="helix" evidence="3">
    <location>
        <begin position="73"/>
        <end position="79"/>
    </location>
</feature>
<feature type="strand" evidence="3">
    <location>
        <begin position="81"/>
        <end position="85"/>
    </location>
</feature>
<feature type="helix" evidence="3">
    <location>
        <begin position="90"/>
        <end position="99"/>
    </location>
</feature>
<feature type="helix" evidence="3">
    <location>
        <begin position="103"/>
        <end position="111"/>
    </location>
</feature>
<feature type="strand" evidence="3">
    <location>
        <begin position="115"/>
        <end position="119"/>
    </location>
</feature>
<feature type="helix" evidence="3">
    <location>
        <begin position="121"/>
        <end position="125"/>
    </location>
</feature>
<feature type="strand" evidence="3">
    <location>
        <begin position="127"/>
        <end position="130"/>
    </location>
</feature>
<feature type="strand" evidence="3">
    <location>
        <begin position="150"/>
        <end position="155"/>
    </location>
</feature>
<feature type="helix" evidence="3">
    <location>
        <begin position="171"/>
        <end position="181"/>
    </location>
</feature>
<feature type="strand" evidence="3">
    <location>
        <begin position="186"/>
        <end position="189"/>
    </location>
</feature>
<feature type="strand" evidence="3">
    <location>
        <begin position="195"/>
        <end position="198"/>
    </location>
</feature>
<feature type="strand" evidence="3">
    <location>
        <begin position="203"/>
        <end position="209"/>
    </location>
</feature>
<feature type="strand" evidence="3">
    <location>
        <begin position="211"/>
        <end position="215"/>
    </location>
</feature>
<feature type="strand" evidence="3">
    <location>
        <begin position="218"/>
        <end position="223"/>
    </location>
</feature>
<dbReference type="EC" id="3.4.13.21"/>
<dbReference type="EMBL" id="U01246">
    <property type="protein sequence ID" value="AAA18923.1"/>
    <property type="molecule type" value="Unassigned_DNA"/>
</dbReference>
<dbReference type="EMBL" id="AE006468">
    <property type="protein sequence ID" value="AAL23014.1"/>
    <property type="molecule type" value="Genomic_DNA"/>
</dbReference>
<dbReference type="PIR" id="A36867">
    <property type="entry name" value="A36867"/>
</dbReference>
<dbReference type="RefSeq" id="NP_463055.1">
    <property type="nucleotide sequence ID" value="NC_003197.2"/>
</dbReference>
<dbReference type="RefSeq" id="WP_000421792.1">
    <property type="nucleotide sequence ID" value="NC_003197.2"/>
</dbReference>
<dbReference type="PDB" id="1FY2">
    <property type="method" value="X-ray"/>
    <property type="resolution" value="1.20 A"/>
    <property type="chains" value="A=1-229"/>
</dbReference>
<dbReference type="PDB" id="1FYE">
    <property type="method" value="X-ray"/>
    <property type="resolution" value="1.20 A"/>
    <property type="chains" value="A=1-229"/>
</dbReference>
<dbReference type="PDB" id="6A4R">
    <property type="method" value="X-ray"/>
    <property type="resolution" value="1.83 A"/>
    <property type="chains" value="A/B=2-229"/>
</dbReference>
<dbReference type="PDB" id="6A4S">
    <property type="method" value="X-ray"/>
    <property type="resolution" value="1.90 A"/>
    <property type="chains" value="A/B=2-229"/>
</dbReference>
<dbReference type="PDBsum" id="1FY2"/>
<dbReference type="PDBsum" id="1FYE"/>
<dbReference type="PDBsum" id="6A4R"/>
<dbReference type="PDBsum" id="6A4S"/>
<dbReference type="SMR" id="P36936"/>
<dbReference type="STRING" id="99287.STM4190"/>
<dbReference type="MEROPS" id="S51.001"/>
<dbReference type="PaxDb" id="99287-STM4190"/>
<dbReference type="GeneID" id="1255716"/>
<dbReference type="KEGG" id="stm:STM4190"/>
<dbReference type="PATRIC" id="fig|99287.12.peg.4404"/>
<dbReference type="HOGENOM" id="CLU_071689_0_0_6"/>
<dbReference type="OMA" id="PWGYAVE"/>
<dbReference type="PhylomeDB" id="P36936"/>
<dbReference type="BioCyc" id="SENT99287:STM4190-MONOMER"/>
<dbReference type="BRENDA" id="3.4.13.21">
    <property type="organism ID" value="5542"/>
</dbReference>
<dbReference type="EvolutionaryTrace" id="P36936"/>
<dbReference type="Proteomes" id="UP000001014">
    <property type="component" value="Chromosome"/>
</dbReference>
<dbReference type="GO" id="GO:0005737">
    <property type="term" value="C:cytoplasm"/>
    <property type="evidence" value="ECO:0007669"/>
    <property type="project" value="UniProtKB-SubCell"/>
</dbReference>
<dbReference type="GO" id="GO:0016805">
    <property type="term" value="F:dipeptidase activity"/>
    <property type="evidence" value="ECO:0007669"/>
    <property type="project" value="UniProtKB-UniRule"/>
</dbReference>
<dbReference type="GO" id="GO:0008236">
    <property type="term" value="F:serine-type peptidase activity"/>
    <property type="evidence" value="ECO:0007669"/>
    <property type="project" value="UniProtKB-KW"/>
</dbReference>
<dbReference type="GO" id="GO:0006508">
    <property type="term" value="P:proteolysis"/>
    <property type="evidence" value="ECO:0007669"/>
    <property type="project" value="UniProtKB-UniRule"/>
</dbReference>
<dbReference type="CDD" id="cd03146">
    <property type="entry name" value="GAT1_Peptidase_E"/>
    <property type="match status" value="1"/>
</dbReference>
<dbReference type="FunFam" id="3.40.50.880:FF:000007">
    <property type="entry name" value="Peptidase E"/>
    <property type="match status" value="1"/>
</dbReference>
<dbReference type="Gene3D" id="3.40.50.880">
    <property type="match status" value="1"/>
</dbReference>
<dbReference type="HAMAP" id="MF_00510">
    <property type="entry name" value="Peptidase_E"/>
    <property type="match status" value="1"/>
</dbReference>
<dbReference type="InterPro" id="IPR029062">
    <property type="entry name" value="Class_I_gatase-like"/>
</dbReference>
<dbReference type="InterPro" id="IPR005320">
    <property type="entry name" value="Peptidase_S51"/>
</dbReference>
<dbReference type="InterPro" id="IPR023172">
    <property type="entry name" value="Peptidase_S51_dipeptidase-E"/>
</dbReference>
<dbReference type="NCBIfam" id="NF003642">
    <property type="entry name" value="PRK05282.1"/>
    <property type="match status" value="1"/>
</dbReference>
<dbReference type="PANTHER" id="PTHR20842:SF0">
    <property type="entry name" value="ALPHA-ASPARTYL DIPEPTIDASE"/>
    <property type="match status" value="1"/>
</dbReference>
<dbReference type="PANTHER" id="PTHR20842">
    <property type="entry name" value="PROTEASE S51 ALPHA-ASPARTYL DIPEPTIDASE"/>
    <property type="match status" value="1"/>
</dbReference>
<dbReference type="Pfam" id="PF03575">
    <property type="entry name" value="Peptidase_S51"/>
    <property type="match status" value="1"/>
</dbReference>
<dbReference type="SUPFAM" id="SSF52317">
    <property type="entry name" value="Class I glutamine amidotransferase-like"/>
    <property type="match status" value="1"/>
</dbReference>
<keyword id="KW-0002">3D-structure</keyword>
<keyword id="KW-0963">Cytoplasm</keyword>
<keyword id="KW-0224">Dipeptidase</keyword>
<keyword id="KW-0903">Direct protein sequencing</keyword>
<keyword id="KW-0378">Hydrolase</keyword>
<keyword id="KW-0645">Protease</keyword>
<keyword id="KW-1185">Reference proteome</keyword>
<keyword id="KW-0720">Serine protease</keyword>
<accession>P36936</accession>
<gene>
    <name type="primary">pepE</name>
    <name type="ordered locus">STM4190</name>
</gene>
<name>PEPE_SALTY</name>
<protein>
    <recommendedName>
        <fullName>Peptidase E</fullName>
        <ecNumber>3.4.13.21</ecNumber>
    </recommendedName>
    <alternativeName>
        <fullName>Alpha-aspartyl dipeptidase</fullName>
    </alternativeName>
    <alternativeName>
        <fullName>Asp-specific dipeptidase</fullName>
    </alternativeName>
    <alternativeName>
        <fullName>Dipeptidase E</fullName>
    </alternativeName>
</protein>
<evidence type="ECO:0000269" key="1">
    <source>
    </source>
</evidence>
<evidence type="ECO:0000305" key="2"/>
<evidence type="ECO:0007829" key="3">
    <source>
        <dbReference type="PDB" id="1FY2"/>
    </source>
</evidence>
<evidence type="ECO:0007829" key="4">
    <source>
        <dbReference type="PDB" id="6A4S"/>
    </source>
</evidence>
<organism>
    <name type="scientific">Salmonella typhimurium (strain LT2 / SGSC1412 / ATCC 700720)</name>
    <dbReference type="NCBI Taxonomy" id="99287"/>
    <lineage>
        <taxon>Bacteria</taxon>
        <taxon>Pseudomonadati</taxon>
        <taxon>Pseudomonadota</taxon>
        <taxon>Gammaproteobacteria</taxon>
        <taxon>Enterobacterales</taxon>
        <taxon>Enterobacteriaceae</taxon>
        <taxon>Salmonella</taxon>
    </lineage>
</organism>
<comment type="function">
    <text>Hydrolyzes dipeptides containing N-terminal aspartate residues. May play a role in allowing the cell to use peptide aspartate to spare carbon otherwise required for the synthesis of the aspartate family of amino acids.</text>
</comment>
<comment type="catalytic activity">
    <reaction>
        <text>Dipeptidase E catalyzes the hydrolysis of dipeptides Asp-|-Xaa. It does not act on peptides with N-terminal Glu, Asn or Gln, nor does it cleave isoaspartyl peptides.</text>
        <dbReference type="EC" id="3.4.13.21"/>
    </reaction>
</comment>
<comment type="subcellular location">
    <subcellularLocation>
        <location>Cytoplasm</location>
    </subcellularLocation>
</comment>
<comment type="similarity">
    <text evidence="2">Belongs to the peptidase S51 family.</text>
</comment>
<sequence length="229" mass="24769">MELLLLSNSTLPGKAWLEHALPLIANQLNGRRSAVFIPFAGVTQTWDEYTDKTAEVLAPLGVNVTGIHRVADPLAAIEKAEIIIVGGGNTFQLLKESRERGLLAPMADRVKRGALYIGWSAGANLACPTIRTTNDMPIVDPNGFDALDLFPLQINPHFTNALPEGHKGETREQRIRELLVVAPELTVIGLPEGNWIQVSNGQAVLGGPNTTWVFKAGEEAVALEAGHRF</sequence>
<proteinExistence type="evidence at protein level"/>
<reference key="1">
    <citation type="journal article" date="1994" name="J. Bacteriol.">
        <title>Cloning and nucleotide sequence of the cyclic AMP receptor protein-regulated Salmonella typhimurium pepE gene and crystallization of its product, an alpha-aspartyl dipeptidase.</title>
        <authorList>
            <person name="Conlin C.A."/>
            <person name="Hakensson K."/>
            <person name="Liljas A."/>
            <person name="Miller C.G."/>
        </authorList>
    </citation>
    <scope>NUCLEOTIDE SEQUENCE [GENOMIC DNA]</scope>
    <scope>PROTEIN SEQUENCE OF 1-25</scope>
    <source>
        <strain>LT2</strain>
    </source>
</reference>
<reference key="2">
    <citation type="journal article" date="2001" name="Nature">
        <title>Complete genome sequence of Salmonella enterica serovar Typhimurium LT2.</title>
        <authorList>
            <person name="McClelland M."/>
            <person name="Sanderson K.E."/>
            <person name="Spieth J."/>
            <person name="Clifton S.W."/>
            <person name="Latreille P."/>
            <person name="Courtney L."/>
            <person name="Porwollik S."/>
            <person name="Ali J."/>
            <person name="Dante M."/>
            <person name="Du F."/>
            <person name="Hou S."/>
            <person name="Layman D."/>
            <person name="Leonard S."/>
            <person name="Nguyen C."/>
            <person name="Scott K."/>
            <person name="Holmes A."/>
            <person name="Grewal N."/>
            <person name="Mulvaney E."/>
            <person name="Ryan E."/>
            <person name="Sun H."/>
            <person name="Florea L."/>
            <person name="Miller W."/>
            <person name="Stoneking T."/>
            <person name="Nhan M."/>
            <person name="Waterston R."/>
            <person name="Wilson R.K."/>
        </authorList>
    </citation>
    <scope>NUCLEOTIDE SEQUENCE [LARGE SCALE GENOMIC DNA]</scope>
    <source>
        <strain>LT2 / SGSC1412 / ATCC 700720</strain>
    </source>
</reference>
<reference key="3">
    <citation type="journal article" date="2000" name="J. Bacteriol.">
        <title>Peptidase E, a peptidase specific for N-terminal aspartic dipeptides, is a serine hydrolase.</title>
        <authorList>
            <person name="Lassy R.A."/>
            <person name="Miller C.G."/>
        </authorList>
    </citation>
    <scope>CHARACTERIZATION</scope>
    <scope>ACTIVE SITES</scope>
    <scope>MUTAGENESIS</scope>
</reference>
<reference key="4">
    <citation type="journal article" date="2000" name="Proc. Natl. Acad. Sci. U.S.A.">
        <title>The structure of aspartyl dipeptidase reveals a unique fold with a Ser-His-Glu catalytic triad.</title>
        <authorList>
            <person name="Hakansson K."/>
            <person name="Wang A.H.-J."/>
            <person name="Miller C.G."/>
        </authorList>
    </citation>
    <scope>X-RAY CRYSTALLOGRAPHY (1.2 ANGSTROMS)</scope>
</reference>